<organism>
    <name type="scientific">Escherichia coli (strain K12)</name>
    <dbReference type="NCBI Taxonomy" id="83333"/>
    <lineage>
        <taxon>Bacteria</taxon>
        <taxon>Pseudomonadati</taxon>
        <taxon>Pseudomonadota</taxon>
        <taxon>Gammaproteobacteria</taxon>
        <taxon>Enterobacterales</taxon>
        <taxon>Enterobacteriaceae</taxon>
        <taxon>Escherichia</taxon>
    </lineage>
</organism>
<gene>
    <name evidence="3" type="primary">ylcJ</name>
    <name type="ordered locus">b4733</name>
</gene>
<evidence type="ECO:0000255" key="1"/>
<evidence type="ECO:0000269" key="2">
    <source>
    </source>
</evidence>
<evidence type="ECO:0000303" key="3">
    <source>
    </source>
</evidence>
<reference key="1">
    <citation type="journal article" date="1997" name="Science">
        <title>The complete genome sequence of Escherichia coli K-12.</title>
        <authorList>
            <person name="Blattner F.R."/>
            <person name="Plunkett G. III"/>
            <person name="Bloch C.A."/>
            <person name="Perna N.T."/>
            <person name="Burland V."/>
            <person name="Riley M."/>
            <person name="Collado-Vides J."/>
            <person name="Glasner J.D."/>
            <person name="Rode C.K."/>
            <person name="Mayhew G.F."/>
            <person name="Gregor J."/>
            <person name="Davis N.W."/>
            <person name="Kirkpatrick H.A."/>
            <person name="Goeden M.A."/>
            <person name="Rose D.J."/>
            <person name="Mau B."/>
            <person name="Shao Y."/>
        </authorList>
    </citation>
    <scope>NUCLEOTIDE SEQUENCE [LARGE SCALE GENOMIC DNA]</scope>
    <source>
        <strain>K12 / MG1655 / ATCC 47076</strain>
    </source>
</reference>
<reference key="2">
    <citation type="journal article" date="2018" name="Proteomics">
        <title>Identifying new small proteins in Escherichia coli.</title>
        <authorList>
            <person name="VanOrsdel C.E."/>
            <person name="Kelly J.P."/>
            <person name="Burke B.N."/>
            <person name="Lein C.D."/>
            <person name="Oufiero C.E."/>
            <person name="Sanchez J.F."/>
            <person name="Wimmers L.E."/>
            <person name="Hearn D.J."/>
            <person name="Abuikhdair F.J."/>
            <person name="Barnhart K.R."/>
            <person name="Duley M.L."/>
            <person name="Ernst S.E.G."/>
            <person name="Kenerson B.A."/>
            <person name="Serafin A.J."/>
            <person name="Hemm M.R."/>
        </authorList>
    </citation>
    <scope>IDENTIFICATION</scope>
    <scope>INDUCTION</scope>
</reference>
<accession>P0DPN3</accession>
<accession>A0A385XMV8</accession>
<proteinExistence type="evidence at protein level"/>
<comment type="induction">
    <text evidence="2">Expressed during exponential phase (at protein level).</text>
</comment>
<dbReference type="EMBL" id="U00096">
    <property type="protein sequence ID" value="AYC08182.1"/>
    <property type="molecule type" value="Genomic_DNA"/>
</dbReference>
<dbReference type="RefSeq" id="WP_001372443.1">
    <property type="nucleotide sequence ID" value="NZ_LN832404.1"/>
</dbReference>
<dbReference type="SMR" id="P0DPN3"/>
<dbReference type="EnsemblBacteria" id="AYC08182">
    <property type="protein sequence ID" value="AYC08182"/>
    <property type="gene ID" value="b4733"/>
</dbReference>
<dbReference type="KEGG" id="ecoc:C3026_02675"/>
<dbReference type="InParanoid" id="P0DPN3"/>
<dbReference type="BioCyc" id="EcoCyc:MONOMER0-4410"/>
<dbReference type="PRO" id="PR:P0DPN3"/>
<dbReference type="Proteomes" id="UP000000625">
    <property type="component" value="Chromosome"/>
</dbReference>
<dbReference type="Pfam" id="PF23688">
    <property type="entry name" value="YlcJ"/>
    <property type="match status" value="1"/>
</dbReference>
<sequence>MSLVLCFLLMSLFFMYSFVLSRLWRKKIAIRLLLYIQDNVTLIVFLNKK</sequence>
<protein>
    <recommendedName>
        <fullName evidence="3">Protein YlcJ</fullName>
    </recommendedName>
</protein>
<name>YLCJ_ECOLI</name>
<keyword id="KW-1185">Reference proteome</keyword>
<keyword id="KW-0732">Signal</keyword>
<feature type="signal peptide" evidence="1">
    <location>
        <begin position="1"/>
        <end position="21"/>
    </location>
</feature>
<feature type="chain" id="PRO_0000445161" description="Protein YlcJ" evidence="1">
    <location>
        <begin position="22"/>
        <end position="49"/>
    </location>
</feature>